<protein>
    <recommendedName>
        <fullName evidence="8 9">Mycocerosic acid synthase-like polyketide synthase</fullName>
        <shortName evidence="8 9">MAS-like PKS</shortName>
        <ecNumber evidence="11">2.3.1.-</ecNumber>
    </recommendedName>
    <alternativeName>
        <fullName>Polyketide synthase Pks5</fullName>
    </alternativeName>
</protein>
<accession>A0R1E8</accession>
<evidence type="ECO:0000250" key="1">
    <source>
        <dbReference type="UniProtKB" id="Q03131"/>
    </source>
</evidence>
<evidence type="ECO:0000255" key="2">
    <source>
        <dbReference type="PROSITE-ProRule" id="PRU00258"/>
    </source>
</evidence>
<evidence type="ECO:0000255" key="3">
    <source>
        <dbReference type="PROSITE-ProRule" id="PRU00303"/>
    </source>
</evidence>
<evidence type="ECO:0000255" key="4">
    <source>
        <dbReference type="PROSITE-ProRule" id="PRU01348"/>
    </source>
</evidence>
<evidence type="ECO:0000255" key="5">
    <source>
        <dbReference type="PROSITE-ProRule" id="PRU01363"/>
    </source>
</evidence>
<evidence type="ECO:0000269" key="6">
    <source>
    </source>
</evidence>
<evidence type="ECO:0000269" key="7">
    <source>
    </source>
</evidence>
<evidence type="ECO:0000303" key="8">
    <source>
    </source>
</evidence>
<evidence type="ECO:0000303" key="9">
    <source>
    </source>
</evidence>
<evidence type="ECO:0000305" key="10"/>
<evidence type="ECO:0000305" key="11">
    <source>
    </source>
</evidence>
<evidence type="ECO:0000305" key="12">
    <source>
    </source>
</evidence>
<evidence type="ECO:0000312" key="13">
    <source>
        <dbReference type="EMBL" id="ABK75252.1"/>
    </source>
</evidence>
<evidence type="ECO:0007829" key="14">
    <source>
        <dbReference type="PDB" id="5BP1"/>
    </source>
</evidence>
<evidence type="ECO:0007829" key="15">
    <source>
        <dbReference type="PDB" id="5BP3"/>
    </source>
</evidence>
<dbReference type="EC" id="2.3.1.-" evidence="11"/>
<dbReference type="EMBL" id="CP000480">
    <property type="protein sequence ID" value="ABK75252.1"/>
    <property type="molecule type" value="Genomic_DNA"/>
</dbReference>
<dbReference type="RefSeq" id="YP_888986.1">
    <property type="nucleotide sequence ID" value="NC_008596.1"/>
</dbReference>
<dbReference type="PDB" id="5BP1">
    <property type="method" value="X-ray"/>
    <property type="resolution" value="2.20 A"/>
    <property type="chains" value="A=1-892"/>
</dbReference>
<dbReference type="PDB" id="5BP2">
    <property type="method" value="X-ray"/>
    <property type="resolution" value="1.75 A"/>
    <property type="chains" value="A/B/C/D=884-1186"/>
</dbReference>
<dbReference type="PDB" id="5BP3">
    <property type="method" value="X-ray"/>
    <property type="resolution" value="1.45 A"/>
    <property type="chains" value="A/B=884-1186"/>
</dbReference>
<dbReference type="PDB" id="5BP4">
    <property type="method" value="X-ray"/>
    <property type="resolution" value="3.75 A"/>
    <property type="chains" value="A/B/C/D/E/F/G/H/I/J/K/L/M/N/O/P/Q/R=884-2020"/>
</dbReference>
<dbReference type="PDBsum" id="5BP1"/>
<dbReference type="PDBsum" id="5BP2"/>
<dbReference type="PDBsum" id="5BP3"/>
<dbReference type="PDBsum" id="5BP4"/>
<dbReference type="SMR" id="A0R1E8"/>
<dbReference type="STRING" id="246196.MSMEG_4727"/>
<dbReference type="PaxDb" id="246196-MSMEI_4610"/>
<dbReference type="KEGG" id="msb:LJ00_23385"/>
<dbReference type="KEGG" id="msm:MSMEG_4727"/>
<dbReference type="PATRIC" id="fig|246196.19.peg.4616"/>
<dbReference type="eggNOG" id="COG0604">
    <property type="taxonomic scope" value="Bacteria"/>
</dbReference>
<dbReference type="eggNOG" id="COG1028">
    <property type="taxonomic scope" value="Bacteria"/>
</dbReference>
<dbReference type="eggNOG" id="COG3321">
    <property type="taxonomic scope" value="Bacteria"/>
</dbReference>
<dbReference type="OrthoDB" id="9778690at2"/>
<dbReference type="BRENDA" id="2.3.1.111">
    <property type="organism ID" value="3512"/>
</dbReference>
<dbReference type="UniPathway" id="UPA00094"/>
<dbReference type="EvolutionaryTrace" id="A0R1E8"/>
<dbReference type="Proteomes" id="UP000000757">
    <property type="component" value="Chromosome"/>
</dbReference>
<dbReference type="GO" id="GO:0005737">
    <property type="term" value="C:cytoplasm"/>
    <property type="evidence" value="ECO:0007669"/>
    <property type="project" value="TreeGrafter"/>
</dbReference>
<dbReference type="GO" id="GO:0005886">
    <property type="term" value="C:plasma membrane"/>
    <property type="evidence" value="ECO:0007669"/>
    <property type="project" value="UniProtKB-SubCell"/>
</dbReference>
<dbReference type="GO" id="GO:0004315">
    <property type="term" value="F:3-oxoacyl-[acyl-carrier-protein] synthase activity"/>
    <property type="evidence" value="ECO:0007669"/>
    <property type="project" value="InterPro"/>
</dbReference>
<dbReference type="GO" id="GO:0004312">
    <property type="term" value="F:fatty acid synthase activity"/>
    <property type="evidence" value="ECO:0007669"/>
    <property type="project" value="TreeGrafter"/>
</dbReference>
<dbReference type="GO" id="GO:0016491">
    <property type="term" value="F:oxidoreductase activity"/>
    <property type="evidence" value="ECO:0007669"/>
    <property type="project" value="UniProtKB-KW"/>
</dbReference>
<dbReference type="GO" id="GO:0031177">
    <property type="term" value="F:phosphopantetheine binding"/>
    <property type="evidence" value="ECO:0007669"/>
    <property type="project" value="InterPro"/>
</dbReference>
<dbReference type="GO" id="GO:0071770">
    <property type="term" value="P:DIM/DIP cell wall layer assembly"/>
    <property type="evidence" value="ECO:0007669"/>
    <property type="project" value="TreeGrafter"/>
</dbReference>
<dbReference type="GO" id="GO:0006633">
    <property type="term" value="P:fatty acid biosynthetic process"/>
    <property type="evidence" value="ECO:0007669"/>
    <property type="project" value="UniProtKB-UniPathway"/>
</dbReference>
<dbReference type="CDD" id="cd05195">
    <property type="entry name" value="enoyl_red"/>
    <property type="match status" value="1"/>
</dbReference>
<dbReference type="CDD" id="cd00833">
    <property type="entry name" value="PKS"/>
    <property type="match status" value="1"/>
</dbReference>
<dbReference type="FunFam" id="3.40.50.720:FF:000372">
    <property type="entry name" value="Mycocerosic acid synthase-like polyketide synthase"/>
    <property type="match status" value="1"/>
</dbReference>
<dbReference type="FunFam" id="3.30.70.250:FF:000003">
    <property type="entry name" value="Polyketide beta-ketoacyl synthase Pks3"/>
    <property type="match status" value="1"/>
</dbReference>
<dbReference type="FunFam" id="3.40.50.720:FF:000209">
    <property type="entry name" value="Polyketide synthase Pks12"/>
    <property type="match status" value="1"/>
</dbReference>
<dbReference type="FunFam" id="3.40.47.10:FF:000019">
    <property type="entry name" value="Polyketide synthase type I"/>
    <property type="match status" value="1"/>
</dbReference>
<dbReference type="Gene3D" id="3.40.47.10">
    <property type="match status" value="1"/>
</dbReference>
<dbReference type="Gene3D" id="1.10.1200.10">
    <property type="entry name" value="ACP-like"/>
    <property type="match status" value="1"/>
</dbReference>
<dbReference type="Gene3D" id="3.30.70.250">
    <property type="entry name" value="Malonyl-CoA ACP transacylase, ACP-binding"/>
    <property type="match status" value="1"/>
</dbReference>
<dbReference type="Gene3D" id="3.40.366.10">
    <property type="entry name" value="Malonyl-Coenzyme A Acyl Carrier Protein, domain 2"/>
    <property type="match status" value="1"/>
</dbReference>
<dbReference type="Gene3D" id="3.90.180.10">
    <property type="entry name" value="Medium-chain alcohol dehydrogenases, catalytic domain"/>
    <property type="match status" value="1"/>
</dbReference>
<dbReference type="Gene3D" id="3.40.50.720">
    <property type="entry name" value="NAD(P)-binding Rossmann-like Domain"/>
    <property type="match status" value="3"/>
</dbReference>
<dbReference type="Gene3D" id="3.10.129.110">
    <property type="entry name" value="Polyketide synthase dehydratase"/>
    <property type="match status" value="1"/>
</dbReference>
<dbReference type="InterPro" id="IPR001227">
    <property type="entry name" value="Ac_transferase_dom_sf"/>
</dbReference>
<dbReference type="InterPro" id="IPR036736">
    <property type="entry name" value="ACP-like_sf"/>
</dbReference>
<dbReference type="InterPro" id="IPR014043">
    <property type="entry name" value="Acyl_transferase_dom"/>
</dbReference>
<dbReference type="InterPro" id="IPR016035">
    <property type="entry name" value="Acyl_Trfase/lysoPLipase"/>
</dbReference>
<dbReference type="InterPro" id="IPR013154">
    <property type="entry name" value="ADH-like_N"/>
</dbReference>
<dbReference type="InterPro" id="IPR011032">
    <property type="entry name" value="GroES-like_sf"/>
</dbReference>
<dbReference type="InterPro" id="IPR018201">
    <property type="entry name" value="Ketoacyl_synth_AS"/>
</dbReference>
<dbReference type="InterPro" id="IPR014031">
    <property type="entry name" value="Ketoacyl_synth_C"/>
</dbReference>
<dbReference type="InterPro" id="IPR014030">
    <property type="entry name" value="Ketoacyl_synth_N"/>
</dbReference>
<dbReference type="InterPro" id="IPR016036">
    <property type="entry name" value="Malonyl_transacylase_ACP-bd"/>
</dbReference>
<dbReference type="InterPro" id="IPR053386">
    <property type="entry name" value="MBFA_synthase"/>
</dbReference>
<dbReference type="InterPro" id="IPR036291">
    <property type="entry name" value="NAD(P)-bd_dom_sf"/>
</dbReference>
<dbReference type="InterPro" id="IPR032821">
    <property type="entry name" value="PKS_assoc"/>
</dbReference>
<dbReference type="InterPro" id="IPR020841">
    <property type="entry name" value="PKS_Beta-ketoAc_synthase_dom"/>
</dbReference>
<dbReference type="InterPro" id="IPR042104">
    <property type="entry name" value="PKS_dehydratase_sf"/>
</dbReference>
<dbReference type="InterPro" id="IPR020807">
    <property type="entry name" value="PKS_DH"/>
</dbReference>
<dbReference type="InterPro" id="IPR049551">
    <property type="entry name" value="PKS_DH_C"/>
</dbReference>
<dbReference type="InterPro" id="IPR049552">
    <property type="entry name" value="PKS_DH_N"/>
</dbReference>
<dbReference type="InterPro" id="IPR020843">
    <property type="entry name" value="PKS_ER"/>
</dbReference>
<dbReference type="InterPro" id="IPR013968">
    <property type="entry name" value="PKS_KR"/>
</dbReference>
<dbReference type="InterPro" id="IPR049900">
    <property type="entry name" value="PKS_mFAS_DH"/>
</dbReference>
<dbReference type="InterPro" id="IPR050091">
    <property type="entry name" value="PKS_NRPS_Biosynth_Enz"/>
</dbReference>
<dbReference type="InterPro" id="IPR020806">
    <property type="entry name" value="PKS_PP-bd"/>
</dbReference>
<dbReference type="InterPro" id="IPR009081">
    <property type="entry name" value="PP-bd_ACP"/>
</dbReference>
<dbReference type="InterPro" id="IPR016039">
    <property type="entry name" value="Thiolase-like"/>
</dbReference>
<dbReference type="NCBIfam" id="NF041183">
    <property type="entry name" value="Pks2_ls1_myc"/>
    <property type="match status" value="1"/>
</dbReference>
<dbReference type="PANTHER" id="PTHR43775">
    <property type="entry name" value="FATTY ACID SYNTHASE"/>
    <property type="match status" value="1"/>
</dbReference>
<dbReference type="PANTHER" id="PTHR43775:SF37">
    <property type="entry name" value="SI:DKEY-61P9.11"/>
    <property type="match status" value="1"/>
</dbReference>
<dbReference type="Pfam" id="PF00698">
    <property type="entry name" value="Acyl_transf_1"/>
    <property type="match status" value="1"/>
</dbReference>
<dbReference type="Pfam" id="PF08240">
    <property type="entry name" value="ADH_N"/>
    <property type="match status" value="1"/>
</dbReference>
<dbReference type="Pfam" id="PF13602">
    <property type="entry name" value="ADH_zinc_N_2"/>
    <property type="match status" value="1"/>
</dbReference>
<dbReference type="Pfam" id="PF16197">
    <property type="entry name" value="KAsynt_C_assoc"/>
    <property type="match status" value="1"/>
</dbReference>
<dbReference type="Pfam" id="PF00109">
    <property type="entry name" value="ketoacyl-synt"/>
    <property type="match status" value="1"/>
</dbReference>
<dbReference type="Pfam" id="PF02801">
    <property type="entry name" value="Ketoacyl-synt_C"/>
    <property type="match status" value="1"/>
</dbReference>
<dbReference type="Pfam" id="PF08659">
    <property type="entry name" value="KR"/>
    <property type="match status" value="1"/>
</dbReference>
<dbReference type="Pfam" id="PF21089">
    <property type="entry name" value="PKS_DH_N"/>
    <property type="match status" value="1"/>
</dbReference>
<dbReference type="Pfam" id="PF00550">
    <property type="entry name" value="PP-binding"/>
    <property type="match status" value="1"/>
</dbReference>
<dbReference type="Pfam" id="PF14765">
    <property type="entry name" value="PS-DH"/>
    <property type="match status" value="1"/>
</dbReference>
<dbReference type="SMART" id="SM00827">
    <property type="entry name" value="PKS_AT"/>
    <property type="match status" value="1"/>
</dbReference>
<dbReference type="SMART" id="SM00826">
    <property type="entry name" value="PKS_DH"/>
    <property type="match status" value="1"/>
</dbReference>
<dbReference type="SMART" id="SM00829">
    <property type="entry name" value="PKS_ER"/>
    <property type="match status" value="1"/>
</dbReference>
<dbReference type="SMART" id="SM00822">
    <property type="entry name" value="PKS_KR"/>
    <property type="match status" value="1"/>
</dbReference>
<dbReference type="SMART" id="SM00825">
    <property type="entry name" value="PKS_KS"/>
    <property type="match status" value="1"/>
</dbReference>
<dbReference type="SMART" id="SM00823">
    <property type="entry name" value="PKS_PP"/>
    <property type="match status" value="1"/>
</dbReference>
<dbReference type="SUPFAM" id="SSF47336">
    <property type="entry name" value="ACP-like"/>
    <property type="match status" value="1"/>
</dbReference>
<dbReference type="SUPFAM" id="SSF52151">
    <property type="entry name" value="FabD/lysophospholipase-like"/>
    <property type="match status" value="1"/>
</dbReference>
<dbReference type="SUPFAM" id="SSF50129">
    <property type="entry name" value="GroES-like"/>
    <property type="match status" value="1"/>
</dbReference>
<dbReference type="SUPFAM" id="SSF51735">
    <property type="entry name" value="NAD(P)-binding Rossmann-fold domains"/>
    <property type="match status" value="3"/>
</dbReference>
<dbReference type="SUPFAM" id="SSF55048">
    <property type="entry name" value="Probable ACP-binding domain of malonyl-CoA ACP transacylase"/>
    <property type="match status" value="1"/>
</dbReference>
<dbReference type="SUPFAM" id="SSF53901">
    <property type="entry name" value="Thiolase-like"/>
    <property type="match status" value="1"/>
</dbReference>
<dbReference type="PROSITE" id="PS50075">
    <property type="entry name" value="CARRIER"/>
    <property type="match status" value="1"/>
</dbReference>
<dbReference type="PROSITE" id="PS00606">
    <property type="entry name" value="KS3_1"/>
    <property type="match status" value="1"/>
</dbReference>
<dbReference type="PROSITE" id="PS52004">
    <property type="entry name" value="KS3_2"/>
    <property type="match status" value="1"/>
</dbReference>
<dbReference type="PROSITE" id="PS52019">
    <property type="entry name" value="PKS_MFAS_DH"/>
    <property type="match status" value="1"/>
</dbReference>
<keyword id="KW-0002">3D-structure</keyword>
<keyword id="KW-0012">Acyltransferase</keyword>
<keyword id="KW-1003">Cell membrane</keyword>
<keyword id="KW-0276">Fatty acid metabolism</keyword>
<keyword id="KW-0443">Lipid metabolism</keyword>
<keyword id="KW-0449">Lipoprotein</keyword>
<keyword id="KW-0472">Membrane</keyword>
<keyword id="KW-0511">Multifunctional enzyme</keyword>
<keyword id="KW-0521">NADP</keyword>
<keyword id="KW-0560">Oxidoreductase</keyword>
<keyword id="KW-0564">Palmitate</keyword>
<keyword id="KW-0596">Phosphopantetheine</keyword>
<keyword id="KW-0597">Phosphoprotein</keyword>
<keyword id="KW-1185">Reference proteome</keyword>
<keyword id="KW-0732">Signal</keyword>
<keyword id="KW-0808">Transferase</keyword>
<proteinExistence type="evidence at protein level"/>
<sequence>MTQNCVAPVAIIGMACRLPGAINSPQQLWEALLRGDDFVTEIPTGRWDAEEYYDPEPGVPGRSVSKWGAFLDDPAAFDPEFFGITEREAAAIDPQHRLLLETAWEAVEHSGLNPAGLAGSATGVFMGLTHNDYAHLAADAKALEGPYGFTGTSFSLASGRIAYALGVHGPAITVDTACSSSLSAIHMACRSLHDGESDVALAGGVSVLLEPRKAAGGSAAGMLSPTGHCHAFDTAADGFVSAEGCVVLTLKRLDDAVADGDRILAVIRGTATNQDGRTVNIATPSADAQAKVYRMALKAAGVEPGTVGLVEAHGTGTPVGDPLEFSSLAEVYGTDGPCALGSIKTNFGHTQSAAGALGVMKAVLALQHNVIPQNLHFTRLPDQMAEIETGLFVPETITPWPVREGQPRRAAVSAYGLSGTNVHAVLEQAPESPAETAAEAISPKAGNALVFPVSASSADALRSTAQHLADWLLRSGDGNGRGPAIDLGDLAYTLARRRGFRAARSAVLAGDRGTLVEGLRQIADGEAMPQQAVTNDDRGPVWVFSGQGSQWASMGAELLDREPAFAAAIAELEPLIAAESDFSVTEALTASETVTGIDRVQPTIFAVQVALAAAMRSHGVVPGAVIGHSMGEVAASVVSGALSLEDGVKVICRRTRLMTRIAGSGAMAMVELPAQQVLSELASRGVDDVVLSVVASPQSTVVGGATASVRELIEMWESRGVMAREIAVDVASHSPQVDPILDDLIEALADLDPAEPEIPYYSATLYDPRDYADYDAYYWADNLRHTVRFSAAVQAALEDGHRVFAELSPHPLLTHPVEQTARSLDMPLAVFAAMRRQQEMPHGLLGFVADLHSAGAAVDFSVLYPTGRLLDAPLPAWTHSTLLLDRELESSAPGVPSVSVHPLLGSHVVLPQEPEEHLWQGDVGTEAHPWLSDHRVHQVAVLPGAAYCEMALAAVTPVLGDTGEVHDLKFHDMLLLDDATPVWVSAAVTAPGTAEFGVETHQSGDRTQRATAVLRGDVDAERPAAHSIDALLAAHPNRVDGDELRAGFGTVGIGHGAAFAGLSEAYVATAAEPTVVAAVALPGPLRSGQRGYTVHPALLDACFQSVIAHPEVQNIASGMLLPLGVRRLRAYGSTRNVRYCLSRIVKADSFGVEADLELLDADGTVLLSAMGLQLGTGNSDKAEEERLLDERLLTIEWQQRELPRPEGSETVDAGSWLVILAGDDDENPRAAGVVSALIGAGMPTTTMAWSHDADHDAQAAALTARLDEQPLAGVAVIVGDSETGTDAHDVGADARRGADHVRHLVRIARTLADAVGEPPRLYVVTHRSQHVLDTDEPYLEHSGLRGLIRVVGMEHPRLRATQIDVDDSTAHEALVRQLLSGSPEDETAWRDGQWYAARLCPSPLRAAERRTAVADNASEGMRLVVRNPGDLESMELVTFERGTPGPGQIEVAVKASSINFADVLVAFGRCPSFDGRLPELGSEFGGVVTAVGPGVTTHRVGDRVGGVSANGCWSNFVTCEADLATKLPEGISEHEAAAVGLAYGTVWLGLTELARMSAGDKILIHSATGGVGQAAIAVARAAGAEIYATAGSEKRRQLLRDWGIEHVYDSRTTAFADQIRTDTDGYGVDIVLNSVTGPAQRAGLELLAFGGRFVEIGKRDIYADTRLGLFPFRRNLSFYAVDLALMTVTHPQKIRDLLATVYRLIADGTLPLPEITHYPLEEAATAIRIMGGAQHTGKLVIDIPDTGQSQVVVPPEQVPVFRGDGAYVITGGLGGLGLFLAERMAAAGCGRIVVNSRSAPSTRSSEIIELIRATGADIVVECGDIAEPDTALRLVAAATQTGLPLRGVLHAAAVVEDATLANITDELVEHDWAPKVYGAWNLHQAVQSGGPATSELDWFCAFSSAAALVGSPGQGAYAAANSWLDAFMQWRRAQGLPATSIAWGAWGEIGRGTAMAEGDNAIAPDEGAYAFEAILRHDRVYNGYAPVLGASWLTAFAQRSPFAELFLADTQGASETRKLRSELAALPREEWPTHLRRLIAEQVGLLLRRTVDPDRPLSEYGLDSLGHLELRTRIETETGVRVSAMDMTTIRGLAQRLCEMLDTDDAVSAPS</sequence>
<feature type="signal peptide" evidence="3">
    <location>
        <begin position="1"/>
        <end position="15"/>
    </location>
</feature>
<feature type="chain" id="PRO_0000437077" description="Mycocerosic acid synthase-like polyketide synthase">
    <location>
        <begin position="16"/>
        <end position="2111"/>
    </location>
</feature>
<feature type="domain" description="Ketosynthase family 3 (KS3)" evidence="4 12">
    <location>
        <begin position="16"/>
        <end position="428"/>
    </location>
</feature>
<feature type="domain" description="PKS/mFAS DH" evidence="5">
    <location>
        <begin position="901"/>
        <end position="1183"/>
    </location>
</feature>
<feature type="domain" description="Carrier" evidence="2">
    <location>
        <begin position="2029"/>
        <end position="2104"/>
    </location>
</feature>
<feature type="region of interest" description="Linker domain (LD)" evidence="12">
    <location>
        <begin position="430"/>
        <end position="537"/>
    </location>
</feature>
<feature type="region of interest" description="Acyltransferase (AT)" evidence="12">
    <location>
        <begin position="538"/>
        <end position="837"/>
    </location>
</feature>
<feature type="region of interest" description="Dehydratase (DH)" evidence="12">
    <location>
        <begin position="896"/>
        <end position="1176"/>
    </location>
</feature>
<feature type="region of interest" description="N-terminal hotdog fold" evidence="5">
    <location>
        <begin position="901"/>
        <end position="1025"/>
    </location>
</feature>
<feature type="region of interest" description="C-terminal hotdog fold" evidence="5">
    <location>
        <begin position="1036"/>
        <end position="1183"/>
    </location>
</feature>
<feature type="region of interest" description="Pseudo beta-ketoacyl reductase (PsiKR)" evidence="12">
    <location>
        <begin position="1215"/>
        <end position="1391"/>
    </location>
</feature>
<feature type="region of interest" description="Enoylreductase (ER)" evidence="12">
    <location>
        <begin position="1419"/>
        <end position="1743"/>
    </location>
</feature>
<feature type="region of interest" description="Beta-ketoacyl reductase (KR)" evidence="12">
    <location>
        <begin position="1765"/>
        <end position="2008"/>
    </location>
</feature>
<feature type="active site" description="Acyl-thioester intermediate; for beta-ketoacyl synthase activity" evidence="4">
    <location>
        <position position="178"/>
    </location>
</feature>
<feature type="active site" description="For beta-ketoacyl synthase activity" evidence="4">
    <location>
        <position position="313"/>
    </location>
</feature>
<feature type="active site" description="For beta-ketoacyl synthase activity" evidence="4">
    <location>
        <position position="349"/>
    </location>
</feature>
<feature type="active site" description="Acyl-ester intermediate; for acyltransferase activity" evidence="10">
    <location>
        <position position="629"/>
    </location>
</feature>
<feature type="active site" description="Proton acceptor; for dehydratase activity" evidence="5">
    <location>
        <position position="934"/>
    </location>
</feature>
<feature type="active site" description="Proton donor; for dehydratase activity" evidence="5">
    <location>
        <position position="1100"/>
    </location>
</feature>
<feature type="binding site" evidence="1">
    <location>
        <begin position="1773"/>
        <end position="1776"/>
    </location>
    <ligand>
        <name>NADP(+)</name>
        <dbReference type="ChEBI" id="CHEBI:58349"/>
    </ligand>
</feature>
<feature type="binding site" evidence="1">
    <location>
        <begin position="1796"/>
        <end position="1799"/>
    </location>
    <ligand>
        <name>NADP(+)</name>
        <dbReference type="ChEBI" id="CHEBI:58349"/>
    </ligand>
</feature>
<feature type="binding site" evidence="1">
    <location>
        <begin position="1824"/>
        <end position="1825"/>
    </location>
    <ligand>
        <name>NADP(+)</name>
        <dbReference type="ChEBI" id="CHEBI:58349"/>
    </ligand>
</feature>
<feature type="binding site" evidence="1">
    <location>
        <begin position="1902"/>
        <end position="1903"/>
    </location>
    <ligand>
        <name>NADP(+)</name>
        <dbReference type="ChEBI" id="CHEBI:58349"/>
    </ligand>
</feature>
<feature type="modified residue" description="O-(pantetheine 4'-phosphoryl)serine" evidence="2">
    <location>
        <position position="2064"/>
    </location>
</feature>
<feature type="lipid moiety-binding region" description="N-palmitoyl cysteine" evidence="3">
    <location>
        <position position="16"/>
    </location>
</feature>
<feature type="lipid moiety-binding region" description="S-diacylglycerol cysteine" evidence="3">
    <location>
        <position position="16"/>
    </location>
</feature>
<feature type="strand" evidence="14">
    <location>
        <begin position="9"/>
        <end position="18"/>
    </location>
</feature>
<feature type="turn" evidence="14">
    <location>
        <begin position="19"/>
        <end position="21"/>
    </location>
</feature>
<feature type="helix" evidence="14">
    <location>
        <begin position="25"/>
        <end position="34"/>
    </location>
</feature>
<feature type="strand" evidence="14">
    <location>
        <begin position="67"/>
        <end position="69"/>
    </location>
</feature>
<feature type="helix" evidence="14">
    <location>
        <begin position="80"/>
        <end position="82"/>
    </location>
</feature>
<feature type="helix" evidence="14">
    <location>
        <begin position="86"/>
        <end position="91"/>
    </location>
</feature>
<feature type="helix" evidence="14">
    <location>
        <begin position="94"/>
        <end position="109"/>
    </location>
</feature>
<feature type="helix" evidence="14">
    <location>
        <begin position="114"/>
        <end position="117"/>
    </location>
</feature>
<feature type="strand" evidence="14">
    <location>
        <begin position="120"/>
        <end position="128"/>
    </location>
</feature>
<feature type="helix" evidence="14">
    <location>
        <begin position="156"/>
        <end position="165"/>
    </location>
</feature>
<feature type="strand" evidence="14">
    <location>
        <begin position="171"/>
        <end position="175"/>
    </location>
</feature>
<feature type="helix" evidence="14">
    <location>
        <begin position="183"/>
        <end position="193"/>
    </location>
</feature>
<feature type="strand" evidence="14">
    <location>
        <begin position="198"/>
        <end position="206"/>
    </location>
</feature>
<feature type="strand" evidence="14">
    <location>
        <begin position="225"/>
        <end position="228"/>
    </location>
</feature>
<feature type="strand" evidence="14">
    <location>
        <begin position="244"/>
        <end position="252"/>
    </location>
</feature>
<feature type="helix" evidence="14">
    <location>
        <begin position="253"/>
        <end position="259"/>
    </location>
</feature>
<feature type="strand" evidence="14">
    <location>
        <begin position="265"/>
        <end position="274"/>
    </location>
</feature>
<feature type="helix" evidence="14">
    <location>
        <begin position="290"/>
        <end position="300"/>
    </location>
</feature>
<feature type="helix" evidence="14">
    <location>
        <begin position="304"/>
        <end position="306"/>
    </location>
</feature>
<feature type="strand" evidence="14">
    <location>
        <begin position="307"/>
        <end position="311"/>
    </location>
</feature>
<feature type="turn" evidence="14">
    <location>
        <begin position="318"/>
        <end position="320"/>
    </location>
</feature>
<feature type="helix" evidence="14">
    <location>
        <begin position="321"/>
        <end position="331"/>
    </location>
</feature>
<feature type="strand" evidence="14">
    <location>
        <begin position="334"/>
        <end position="336"/>
    </location>
</feature>
<feature type="strand" evidence="14">
    <location>
        <begin position="339"/>
        <end position="341"/>
    </location>
</feature>
<feature type="helix" evidence="14">
    <location>
        <begin position="344"/>
        <end position="347"/>
    </location>
</feature>
<feature type="helix" evidence="14">
    <location>
        <begin position="351"/>
        <end position="353"/>
    </location>
</feature>
<feature type="helix" evidence="14">
    <location>
        <begin position="354"/>
        <end position="367"/>
    </location>
</feature>
<feature type="strand" evidence="14">
    <location>
        <begin position="368"/>
        <end position="371"/>
    </location>
</feature>
<feature type="helix" evidence="14">
    <location>
        <begin position="382"/>
        <end position="385"/>
    </location>
</feature>
<feature type="strand" evidence="14">
    <location>
        <begin position="409"/>
        <end position="415"/>
    </location>
</feature>
<feature type="strand" evidence="14">
    <location>
        <begin position="419"/>
        <end position="428"/>
    </location>
</feature>
<feature type="strand" evidence="14">
    <location>
        <begin position="449"/>
        <end position="457"/>
    </location>
</feature>
<feature type="helix" evidence="14">
    <location>
        <begin position="458"/>
        <end position="474"/>
    </location>
</feature>
<feature type="strand" evidence="14">
    <location>
        <begin position="475"/>
        <end position="477"/>
    </location>
</feature>
<feature type="helix" evidence="14">
    <location>
        <begin position="487"/>
        <end position="496"/>
    </location>
</feature>
<feature type="strand" evidence="14">
    <location>
        <begin position="502"/>
        <end position="511"/>
    </location>
</feature>
<feature type="helix" evidence="14">
    <location>
        <begin position="512"/>
        <end position="523"/>
    </location>
</feature>
<feature type="strand" evidence="14">
    <location>
        <begin position="541"/>
        <end position="544"/>
    </location>
</feature>
<feature type="turn" evidence="14">
    <location>
        <begin position="552"/>
        <end position="555"/>
    </location>
</feature>
<feature type="helix" evidence="14">
    <location>
        <begin position="556"/>
        <end position="561"/>
    </location>
</feature>
<feature type="helix" evidence="14">
    <location>
        <begin position="563"/>
        <end position="580"/>
    </location>
</feature>
<feature type="helix" evidence="14">
    <location>
        <begin position="584"/>
        <end position="589"/>
    </location>
</feature>
<feature type="strand" evidence="14">
    <location>
        <begin position="590"/>
        <end position="592"/>
    </location>
</feature>
<feature type="turn" evidence="14">
    <location>
        <begin position="597"/>
        <end position="599"/>
    </location>
</feature>
<feature type="helix" evidence="14">
    <location>
        <begin position="600"/>
        <end position="616"/>
    </location>
</feature>
<feature type="turn" evidence="14">
    <location>
        <begin position="617"/>
        <end position="619"/>
    </location>
</feature>
<feature type="strand" evidence="14">
    <location>
        <begin position="623"/>
        <end position="627"/>
    </location>
</feature>
<feature type="helix" evidence="14">
    <location>
        <begin position="631"/>
        <end position="638"/>
    </location>
</feature>
<feature type="helix" evidence="14">
    <location>
        <begin position="644"/>
        <end position="658"/>
    </location>
</feature>
<feature type="helix" evidence="14">
    <location>
        <begin position="659"/>
        <end position="661"/>
    </location>
</feature>
<feature type="strand" evidence="14">
    <location>
        <begin position="665"/>
        <end position="672"/>
    </location>
</feature>
<feature type="helix" evidence="14">
    <location>
        <begin position="674"/>
        <end position="683"/>
    </location>
</feature>
<feature type="strand" evidence="14">
    <location>
        <begin position="688"/>
        <end position="696"/>
    </location>
</feature>
<feature type="strand" evidence="14">
    <location>
        <begin position="699"/>
        <end position="704"/>
    </location>
</feature>
<feature type="helix" evidence="14">
    <location>
        <begin position="706"/>
        <end position="717"/>
    </location>
</feature>
<feature type="turn" evidence="14">
    <location>
        <begin position="718"/>
        <end position="720"/>
    </location>
</feature>
<feature type="strand" evidence="14">
    <location>
        <begin position="723"/>
        <end position="726"/>
    </location>
</feature>
<feature type="helix" evidence="14">
    <location>
        <begin position="735"/>
        <end position="740"/>
    </location>
</feature>
<feature type="helix" evidence="14">
    <location>
        <begin position="741"/>
        <end position="747"/>
    </location>
</feature>
<feature type="turn" evidence="14">
    <location>
        <begin position="748"/>
        <end position="750"/>
    </location>
</feature>
<feature type="strand" evidence="14">
    <location>
        <begin position="763"/>
        <end position="767"/>
    </location>
</feature>
<feature type="helix" evidence="14">
    <location>
        <begin position="776"/>
        <end position="784"/>
    </location>
</feature>
<feature type="helix" evidence="14">
    <location>
        <begin position="789"/>
        <end position="798"/>
    </location>
</feature>
<feature type="strand" evidence="14">
    <location>
        <begin position="803"/>
        <end position="806"/>
    </location>
</feature>
<feature type="strand" evidence="14">
    <location>
        <begin position="808"/>
        <end position="810"/>
    </location>
</feature>
<feature type="helix" evidence="14">
    <location>
        <begin position="814"/>
        <end position="823"/>
    </location>
</feature>
<feature type="strand" evidence="14">
    <location>
        <begin position="829"/>
        <end position="833"/>
    </location>
</feature>
<feature type="turn" evidence="14">
    <location>
        <begin position="841"/>
        <end position="844"/>
    </location>
</feature>
<feature type="helix" evidence="14">
    <location>
        <begin position="845"/>
        <end position="854"/>
    </location>
</feature>
<feature type="helix" evidence="14">
    <location>
        <begin position="860"/>
        <end position="863"/>
    </location>
</feature>
<feature type="turn" evidence="15">
    <location>
        <begin position="902"/>
        <end position="904"/>
    </location>
</feature>
<feature type="strand" evidence="15">
    <location>
        <begin position="905"/>
        <end position="909"/>
    </location>
</feature>
<feature type="strand" evidence="15">
    <location>
        <begin position="911"/>
        <end position="914"/>
    </location>
</feature>
<feature type="strand" evidence="15">
    <location>
        <begin position="916"/>
        <end position="922"/>
    </location>
</feature>
<feature type="turn" evidence="15">
    <location>
        <begin position="925"/>
        <end position="927"/>
    </location>
</feature>
<feature type="helix" evidence="15">
    <location>
        <begin position="929"/>
        <end position="933"/>
    </location>
</feature>
<feature type="strand" evidence="15">
    <location>
        <begin position="934"/>
        <end position="936"/>
    </location>
</feature>
<feature type="strand" evidence="15">
    <location>
        <begin position="939"/>
        <end position="941"/>
    </location>
</feature>
<feature type="helix" evidence="15">
    <location>
        <begin position="944"/>
        <end position="959"/>
    </location>
</feature>
<feature type="strand" evidence="15">
    <location>
        <begin position="964"/>
        <end position="969"/>
    </location>
</feature>
<feature type="strand" evidence="15">
    <location>
        <begin position="981"/>
        <end position="990"/>
    </location>
</feature>
<feature type="strand" evidence="15">
    <location>
        <begin position="993"/>
        <end position="1000"/>
    </location>
</feature>
<feature type="strand" evidence="15">
    <location>
        <begin position="1007"/>
        <end position="1016"/>
    </location>
</feature>
<feature type="helix" evidence="15">
    <location>
        <begin position="1028"/>
        <end position="1033"/>
    </location>
</feature>
<feature type="strand" evidence="15">
    <location>
        <begin position="1037"/>
        <end position="1040"/>
    </location>
</feature>
<feature type="helix" evidence="15">
    <location>
        <begin position="1041"/>
        <end position="1050"/>
    </location>
</feature>
<feature type="strand" evidence="15">
    <location>
        <begin position="1053"/>
        <end position="1055"/>
    </location>
</feature>
<feature type="helix" evidence="15">
    <location>
        <begin position="1057"/>
        <end position="1059"/>
    </location>
</feature>
<feature type="strand" evidence="15">
    <location>
        <begin position="1062"/>
        <end position="1067"/>
    </location>
</feature>
<feature type="strand" evidence="15">
    <location>
        <begin position="1074"/>
        <end position="1079"/>
    </location>
</feature>
<feature type="helix" evidence="15">
    <location>
        <begin position="1083"/>
        <end position="1089"/>
    </location>
</feature>
<feature type="helix" evidence="15">
    <location>
        <begin position="1096"/>
        <end position="1106"/>
    </location>
</feature>
<feature type="helix" evidence="15">
    <location>
        <begin position="1110"/>
        <end position="1115"/>
    </location>
</feature>
<feature type="strand" evidence="15">
    <location>
        <begin position="1121"/>
        <end position="1130"/>
    </location>
</feature>
<feature type="strand" evidence="15">
    <location>
        <begin position="1137"/>
        <end position="1148"/>
    </location>
</feature>
<feature type="strand" evidence="15">
    <location>
        <begin position="1151"/>
        <end position="1160"/>
    </location>
</feature>
<feature type="strand" evidence="15">
    <location>
        <begin position="1165"/>
        <end position="1175"/>
    </location>
</feature>
<feature type="turn" evidence="15">
    <location>
        <begin position="1180"/>
        <end position="1182"/>
    </location>
</feature>
<name>PKS5_MYCS2</name>
<gene>
    <name evidence="8" type="primary">pks5</name>
    <name evidence="13" type="ordered locus">MSMEG_4727</name>
</gene>
<reference key="1">
    <citation type="submission" date="2006-10" db="EMBL/GenBank/DDBJ databases">
        <authorList>
            <person name="Fleischmann R.D."/>
            <person name="Dodson R.J."/>
            <person name="Haft D.H."/>
            <person name="Merkel J.S."/>
            <person name="Nelson W.C."/>
            <person name="Fraser C.M."/>
        </authorList>
    </citation>
    <scope>NUCLEOTIDE SEQUENCE [LARGE SCALE GENOMIC DNA]</scope>
    <source>
        <strain>ATCC 700084 / mc(2)155</strain>
    </source>
</reference>
<reference key="2">
    <citation type="journal article" date="2009" name="J. Bacteriol.">
        <title>Identification of the polyketide synthase involved in the biosynthesis of the surface-exposed lipooligosaccharides in mycobacteria.</title>
        <authorList>
            <person name="Etienne G."/>
            <person name="Malaga W."/>
            <person name="Laval F."/>
            <person name="Lemassu A."/>
            <person name="Guilhot C."/>
            <person name="Daffe M."/>
        </authorList>
    </citation>
    <scope>FUNCTION</scope>
    <scope>DISRUPTION PHENOTYPE</scope>
    <scope>PATHWAY</scope>
    <source>
        <strain>ATCC 607 / DSM 43465 / JCM 20379 / NBRC 3207 / NRRL B-692</strain>
    </source>
</reference>
<reference key="3">
    <citation type="journal article" date="2016" name="Nature">
        <title>Mycocerosic acid synthase exemplifies the architecture of reducing polyketide synthases.</title>
        <authorList>
            <person name="Herbst D.A."/>
            <person name="Jakob R.P."/>
            <person name="Zahringer F."/>
            <person name="Maier T."/>
        </authorList>
    </citation>
    <scope>X-RAY CRYSTALLOGRAPHY (2.20 ANGSTROMS) OF 1-2020 (CONDENSING AND MODIFYING REGIONS) IN COMPLEX WITH NADP</scope>
    <scope>DOMAIN</scope>
    <scope>SUBUNIT</scope>
    <source>
        <strain>ATCC 700084 / mc(2)155</strain>
    </source>
</reference>
<organism>
    <name type="scientific">Mycolicibacterium smegmatis (strain ATCC 700084 / mc(2)155)</name>
    <name type="common">Mycobacterium smegmatis</name>
    <dbReference type="NCBI Taxonomy" id="246196"/>
    <lineage>
        <taxon>Bacteria</taxon>
        <taxon>Bacillati</taxon>
        <taxon>Actinomycetota</taxon>
        <taxon>Actinomycetes</taxon>
        <taxon>Mycobacteriales</taxon>
        <taxon>Mycobacteriaceae</taxon>
        <taxon>Mycolicibacterium</taxon>
    </lineage>
</organism>
<comment type="function">
    <text evidence="6">Polyketide synthase involved in the biosynthesis of 2,4-dimethyl-2-eicosenoic acid, a lipid component of the lipooligosaccharides (LOS) which are not located at the bacterial surface but rather in deeper compartments of the cell envelope of M.smegmatis.</text>
</comment>
<comment type="pathway">
    <text evidence="6">Lipid metabolism; fatty acid biosynthesis.</text>
</comment>
<comment type="subunit">
    <text evidence="7">Homodimer.</text>
</comment>
<comment type="subcellular location">
    <subcellularLocation>
        <location evidence="3">Cell membrane</location>
        <topology evidence="3">Lipid-anchor</topology>
    </subcellularLocation>
</comment>
<comment type="domain">
    <text evidence="7">Is organized in a condensing KS-AT and a modifying DH-PsiKR-ER-KR region, followed by a flexibly tethered ACP domain.</text>
</comment>
<comment type="disruption phenotype">
    <text evidence="6">Disruption of this gene abolishes the production of both 2,4-dimethyl-2-eicosenoic acid, a polymethyl-branched fatty acid (PMB-FA), and lipooligosaccharides (LOS). Complementation of the mutant with the wild-type gene fully restores the phenotype.</text>
</comment>